<dbReference type="EMBL" id="U58313">
    <property type="protein sequence ID" value="AAB02562.1"/>
    <property type="status" value="ALT_INIT"/>
    <property type="molecule type" value="Genomic_DNA"/>
</dbReference>
<dbReference type="EMBL" id="AE006470">
    <property type="protein sequence ID" value="AAM73271.1"/>
    <property type="status" value="ALT_INIT"/>
    <property type="molecule type" value="Genomic_DNA"/>
</dbReference>
<dbReference type="RefSeq" id="NP_662929.1">
    <property type="nucleotide sequence ID" value="NC_002932.3"/>
</dbReference>
<dbReference type="RefSeq" id="WP_164927140.1">
    <property type="nucleotide sequence ID" value="NC_002932.3"/>
</dbReference>
<dbReference type="SMR" id="Q46383"/>
<dbReference type="STRING" id="194439.CT2054"/>
<dbReference type="EnsemblBacteria" id="AAM73271">
    <property type="protein sequence ID" value="AAM73271"/>
    <property type="gene ID" value="CT2054"/>
</dbReference>
<dbReference type="KEGG" id="cte:CT2054"/>
<dbReference type="PATRIC" id="fig|194439.7.peg.1861"/>
<dbReference type="eggNOG" id="ENOG50349SF">
    <property type="taxonomic scope" value="Bacteria"/>
</dbReference>
<dbReference type="HOGENOM" id="CLU_196054_0_0_10"/>
<dbReference type="OrthoDB" id="595389at2"/>
<dbReference type="Proteomes" id="UP000001007">
    <property type="component" value="Chromosome"/>
</dbReference>
<dbReference type="GO" id="GO:0033105">
    <property type="term" value="C:chlorosome envelope"/>
    <property type="evidence" value="ECO:0007669"/>
    <property type="project" value="UniProtKB-SubCell"/>
</dbReference>
<dbReference type="GO" id="GO:0042314">
    <property type="term" value="F:bacteriochlorophyll binding"/>
    <property type="evidence" value="ECO:0007669"/>
    <property type="project" value="UniProtKB-KW"/>
</dbReference>
<dbReference type="GO" id="GO:0015979">
    <property type="term" value="P:photosynthesis"/>
    <property type="evidence" value="ECO:0007669"/>
    <property type="project" value="UniProtKB-KW"/>
</dbReference>
<accession>Q46383</accession>
<keyword id="KW-0076">Bacteriochlorophyll</keyword>
<keyword id="KW-0148">Chlorophyll</keyword>
<keyword id="KW-0151">Chlorosome</keyword>
<keyword id="KW-0157">Chromophore</keyword>
<keyword id="KW-0602">Photosynthesis</keyword>
<keyword id="KW-1185">Reference proteome</keyword>
<keyword id="KW-0677">Repeat</keyword>
<comment type="function">
    <text>Component of the photosynthetic apparatus which may bind the chlorosome to the bacteriochlorophyll a protein monolayer.</text>
</comment>
<comment type="subcellular location">
    <subcellularLocation>
        <location>Chlorosome</location>
        <location>Chlorosome envelope</location>
    </subcellularLocation>
</comment>
<comment type="similarity">
    <text evidence="2">Belongs to the CsmB/CsmF family.</text>
</comment>
<comment type="sequence caution" evidence="2">
    <conflict type="erroneous initiation">
        <sequence resource="EMBL-CDS" id="AAB02562"/>
    </conflict>
</comment>
<comment type="sequence caution" evidence="2">
    <conflict type="erroneous initiation">
        <sequence resource="EMBL-CDS" id="AAM73271"/>
    </conflict>
</comment>
<gene>
    <name type="primary">csmB</name>
    <name type="ordered locus">CT2054</name>
</gene>
<protein>
    <recommendedName>
        <fullName>Chlorosome envelope protein B</fullName>
    </recommendedName>
    <alternativeName>
        <fullName>Chlorosome 7.5 kDa protein</fullName>
    </alternativeName>
    <alternativeName>
        <fullName>Gerola-Olson chlorosome protein</fullName>
    </alternativeName>
</protein>
<evidence type="ECO:0000250" key="1"/>
<evidence type="ECO:0000305" key="2"/>
<sequence length="75" mass="7609">MSNGTNIDVAGAINTLAETFGKLFQMQIDVANTALKALADVAEPLGKTATDLIGSFTGAATQVLQSVSSAIAPKK</sequence>
<proteinExistence type="evidence at protein level"/>
<organism>
    <name type="scientific">Chlorobaculum tepidum (strain ATCC 49652 / DSM 12025 / NBRC 103806 / TLS)</name>
    <name type="common">Chlorobium tepidum</name>
    <dbReference type="NCBI Taxonomy" id="194439"/>
    <lineage>
        <taxon>Bacteria</taxon>
        <taxon>Pseudomonadati</taxon>
        <taxon>Chlorobiota</taxon>
        <taxon>Chlorobiia</taxon>
        <taxon>Chlorobiales</taxon>
        <taxon>Chlorobiaceae</taxon>
        <taxon>Chlorobaculum</taxon>
    </lineage>
</organism>
<name>CSMB_CHLTE</name>
<reference key="1">
    <citation type="journal article" date="1994" name="Photosyn. Res.">
        <title>Genes encoding two chlorosome components from the green sulfur bacteria Chlorobium vibrioforme strain 8327D and Chlorobium tepidum.</title>
        <authorList>
            <person name="Chung S."/>
            <person name="Frank G."/>
            <person name="Zuber H."/>
            <person name="Bryant D.A."/>
        </authorList>
    </citation>
    <scope>NUCLEOTIDE SEQUENCE [GENOMIC DNA]</scope>
</reference>
<reference key="2">
    <citation type="journal article" date="2002" name="Proc. Natl. Acad. Sci. U.S.A.">
        <title>The complete genome sequence of Chlorobium tepidum TLS, a photosynthetic, anaerobic, green-sulfur bacterium.</title>
        <authorList>
            <person name="Eisen J.A."/>
            <person name="Nelson K.E."/>
            <person name="Paulsen I.T."/>
            <person name="Heidelberg J.F."/>
            <person name="Wu M."/>
            <person name="Dodson R.J."/>
            <person name="DeBoy R.T."/>
            <person name="Gwinn M.L."/>
            <person name="Nelson W.C."/>
            <person name="Haft D.H."/>
            <person name="Hickey E.K."/>
            <person name="Peterson J.D."/>
            <person name="Durkin A.S."/>
            <person name="Kolonay J.F."/>
            <person name="Yang F."/>
            <person name="Holt I.E."/>
            <person name="Umayam L.A."/>
            <person name="Mason T.M."/>
            <person name="Brenner M."/>
            <person name="Shea T.P."/>
            <person name="Parksey D.S."/>
            <person name="Nierman W.C."/>
            <person name="Feldblyum T.V."/>
            <person name="Hansen C.L."/>
            <person name="Craven M.B."/>
            <person name="Radune D."/>
            <person name="Vamathevan J.J."/>
            <person name="Khouri H.M."/>
            <person name="White O."/>
            <person name="Gruber T.M."/>
            <person name="Ketchum K.A."/>
            <person name="Venter J.C."/>
            <person name="Tettelin H."/>
            <person name="Bryant D.A."/>
            <person name="Fraser C.M."/>
        </authorList>
    </citation>
    <scope>NUCLEOTIDE SEQUENCE [LARGE SCALE GENOMIC DNA]</scope>
    <source>
        <strain>ATCC 49652 / DSM 12025 / NBRC 103806 / TLS</strain>
    </source>
</reference>
<reference key="3">
    <citation type="journal article" date="1996" name="Arch. Microbiol.">
        <title>Characterization of csmB genes, encoding a 7.5-kDa protein of the chlorosome envelope, from the green sulfur bacteria Chlorobium vibrioforme 8327D and Chlorobium tepidum.</title>
        <authorList>
            <person name="Chung S."/>
            <person name="Bryant D.A."/>
        </authorList>
    </citation>
    <scope>CHARACTERIZATION</scope>
</reference>
<feature type="initiator methionine" description="Removed" evidence="1">
    <location>
        <position position="1"/>
    </location>
</feature>
<feature type="chain" id="PRO_0000192638" description="Chlorosome envelope protein B">
    <location>
        <begin position="2"/>
        <end position="75"/>
    </location>
</feature>
<feature type="repeat" description="1">
    <location>
        <begin position="8"/>
        <end position="17"/>
    </location>
</feature>
<feature type="repeat" description="2">
    <location>
        <begin position="29"/>
        <end position="39"/>
    </location>
</feature>
<feature type="repeat" description="3">
    <location>
        <begin position="40"/>
        <end position="50"/>
    </location>
</feature>
<feature type="repeat" description="4">
    <location>
        <begin position="51"/>
        <end position="61"/>
    </location>
</feature>
<feature type="region of interest" description="4 X approximate repeats">
    <location>
        <begin position="8"/>
        <end position="61"/>
    </location>
</feature>